<sequence length="903" mass="102019">MAVPKMVFSDVESFLDSHPELFEDYLNRKGSSSMVEKWLKNHQAGKSEAEPKEEKSSVCKDSWASKCDGLQRRASQKELRKTFARSKAINVNRTYDEHVNSRAQEPLTSMRRRALLRKASSLPPTTAHILSALLESRVNIPQYPSTAVDFKYYLKEHNEREFFLELVKDISNDLDLTSLSYKILVFVCIMVDADRCSLFLVEGTGNKKTLVSKFFDVHAGTTVLPSMNSGEVQVPWGKGIIGYVAEHGETVNIPDAYQDRRFSDEIDKLTGYKTKSLLCMPIQNSDGEIIGVAQAINKSSSGELFTEDDEKVLQMYLPFCGIAISNAQLFAASRKEYDRSRALLEVVNDLFEEQTDLEKIVRKIMHRAQTLLKCERCSVQLLEDIESPVVKFTKSFELLSPKCSADAESSFKDSMEKSSYSDWLINNSIAELVASTGLPVNISDAYQDPRFDAEADQFSDFHIRSVLCVPIWNSNHQIIGVAQVLNRLDGKPFDDADQRLFEAFVIFCGLGINNTIMYDQVKKSWAKQSVALDVLSYHATCSKTEVDKFKAANIPLVCELGIDKLSFDDFSLDVDAMITAALRMFIELGMVQKFKIDYETLCRWLLTVRKNYRMVLYHNWRHAFNVCQCMFAMLTTAGFQETLTDVEILALIVGCVCHDLDHRGTNNAFQAKTGSALSLLYGTSATLEHHHFNHAVMILQSEGHNIFCNLSSTEYSDLMQLLKQSILATDLTLYFENRNSFFELVSIGEYNWNVKTHRDMCRSMMMTACDLGAVTKPWDISRKVAELVTSEFFEQGDRERSELKLTPSAIFDRNRKDELPGLQLEWIDGICAPLYETLVKLNPKLQPMVDMINANRVKWEELDKKRQHDHGASVPASPCSAAEGSETGGVPCCSNNTPPTHVS</sequence>
<evidence type="ECO:0000250" key="1">
    <source>
        <dbReference type="UniProtKB" id="O76083"/>
    </source>
</evidence>
<evidence type="ECO:0000250" key="2">
    <source>
        <dbReference type="UniProtKB" id="Q922S4"/>
    </source>
</evidence>
<evidence type="ECO:0000250" key="3">
    <source>
        <dbReference type="UniProtKB" id="Q9HCR9"/>
    </source>
</evidence>
<evidence type="ECO:0000255" key="4">
    <source>
        <dbReference type="PROSITE-ProRule" id="PRU01192"/>
    </source>
</evidence>
<evidence type="ECO:0000256" key="5">
    <source>
        <dbReference type="SAM" id="MobiDB-lite"/>
    </source>
</evidence>
<evidence type="ECO:0000305" key="6"/>
<feature type="chain" id="PRO_0000247043" description="Dual 3',5'-cyclic-AMP and -GMP phosphodiesterase 11A">
    <location>
        <begin position="1"/>
        <end position="903"/>
    </location>
</feature>
<feature type="domain" description="GAF 1">
    <location>
        <begin position="175"/>
        <end position="324"/>
    </location>
</feature>
<feature type="domain" description="GAF 2">
    <location>
        <begin position="356"/>
        <end position="512"/>
    </location>
</feature>
<feature type="domain" description="PDEase" evidence="4">
    <location>
        <begin position="542"/>
        <end position="866"/>
    </location>
</feature>
<feature type="region of interest" description="Disordered" evidence="5">
    <location>
        <begin position="863"/>
        <end position="903"/>
    </location>
</feature>
<feature type="compositionally biased region" description="Polar residues" evidence="5">
    <location>
        <begin position="893"/>
        <end position="903"/>
    </location>
</feature>
<feature type="active site" description="Proton donor" evidence="1">
    <location>
        <position position="618"/>
    </location>
</feature>
<feature type="binding site" evidence="2">
    <location>
        <position position="378"/>
    </location>
    <ligand>
        <name>3',5'-cyclic GMP</name>
        <dbReference type="ChEBI" id="CHEBI:57746"/>
    </ligand>
</feature>
<feature type="binding site" evidence="4">
    <location>
        <position position="622"/>
    </location>
    <ligand>
        <name>a divalent metal cation</name>
        <dbReference type="ChEBI" id="CHEBI:60240"/>
        <label>1</label>
    </ligand>
</feature>
<feature type="binding site" evidence="4">
    <location>
        <position position="658"/>
    </location>
    <ligand>
        <name>a divalent metal cation</name>
        <dbReference type="ChEBI" id="CHEBI:60240"/>
        <label>1</label>
    </ligand>
</feature>
<feature type="binding site" evidence="4">
    <location>
        <position position="659"/>
    </location>
    <ligand>
        <name>a divalent metal cation</name>
        <dbReference type="ChEBI" id="CHEBI:60240"/>
        <label>1</label>
    </ligand>
</feature>
<feature type="binding site" evidence="4">
    <location>
        <position position="659"/>
    </location>
    <ligand>
        <name>a divalent metal cation</name>
        <dbReference type="ChEBI" id="CHEBI:60240"/>
        <label>2</label>
    </ligand>
</feature>
<feature type="binding site" evidence="4">
    <location>
        <position position="770"/>
    </location>
    <ligand>
        <name>a divalent metal cation</name>
        <dbReference type="ChEBI" id="CHEBI:60240"/>
        <label>1</label>
    </ligand>
</feature>
<organism>
    <name type="scientific">Takifugu rubripes</name>
    <name type="common">Japanese pufferfish</name>
    <name type="synonym">Fugu rubripes</name>
    <dbReference type="NCBI Taxonomy" id="31033"/>
    <lineage>
        <taxon>Eukaryota</taxon>
        <taxon>Metazoa</taxon>
        <taxon>Chordata</taxon>
        <taxon>Craniata</taxon>
        <taxon>Vertebrata</taxon>
        <taxon>Euteleostomi</taxon>
        <taxon>Actinopterygii</taxon>
        <taxon>Neopterygii</taxon>
        <taxon>Teleostei</taxon>
        <taxon>Neoteleostei</taxon>
        <taxon>Acanthomorphata</taxon>
        <taxon>Eupercaria</taxon>
        <taxon>Tetraodontiformes</taxon>
        <taxon>Tetradontoidea</taxon>
        <taxon>Tetraodontidae</taxon>
        <taxon>Takifugu</taxon>
    </lineage>
</organism>
<name>PDE11_TAKRU</name>
<protein>
    <recommendedName>
        <fullName>Dual 3',5'-cyclic-AMP and -GMP phosphodiesterase 11A</fullName>
        <ecNumber evidence="3">3.1.4.35</ecNumber>
        <ecNumber evidence="3">3.1.4.53</ecNumber>
    </recommendedName>
    <alternativeName>
        <fullName>cAMP and cGMP phosphodiesterase 11A</fullName>
    </alternativeName>
</protein>
<dbReference type="EC" id="3.1.4.35" evidence="3"/>
<dbReference type="EC" id="3.1.4.53" evidence="3"/>
<dbReference type="EMBL" id="DQ481668">
    <property type="protein sequence ID" value="ABF22471.1"/>
    <property type="molecule type" value="Genomic_DNA"/>
</dbReference>
<dbReference type="RefSeq" id="XP_029705207.1">
    <property type="nucleotide sequence ID" value="XM_029849347.1"/>
</dbReference>
<dbReference type="SMR" id="Q1KKS3"/>
<dbReference type="FunCoup" id="Q1KKS3">
    <property type="interactions" value="137"/>
</dbReference>
<dbReference type="STRING" id="31033.ENSTRUP00000044767"/>
<dbReference type="GeneID" id="101061997"/>
<dbReference type="eggNOG" id="KOG3689">
    <property type="taxonomic scope" value="Eukaryota"/>
</dbReference>
<dbReference type="HOGENOM" id="CLU_006980_0_1_1"/>
<dbReference type="InParanoid" id="Q1KKS3"/>
<dbReference type="Proteomes" id="UP000005226">
    <property type="component" value="Unplaced"/>
</dbReference>
<dbReference type="GO" id="GO:0005829">
    <property type="term" value="C:cytosol"/>
    <property type="evidence" value="ECO:0007669"/>
    <property type="project" value="UniProtKB-SubCell"/>
</dbReference>
<dbReference type="GO" id="GO:0004115">
    <property type="term" value="F:3',5'-cyclic-AMP phosphodiesterase activity"/>
    <property type="evidence" value="ECO:0007669"/>
    <property type="project" value="UniProtKB-EC"/>
</dbReference>
<dbReference type="GO" id="GO:0047555">
    <property type="term" value="F:3',5'-cyclic-GMP phosphodiesterase activity"/>
    <property type="evidence" value="ECO:0007669"/>
    <property type="project" value="UniProtKB-EC"/>
</dbReference>
<dbReference type="GO" id="GO:0046872">
    <property type="term" value="F:metal ion binding"/>
    <property type="evidence" value="ECO:0007669"/>
    <property type="project" value="UniProtKB-KW"/>
</dbReference>
<dbReference type="GO" id="GO:0007165">
    <property type="term" value="P:signal transduction"/>
    <property type="evidence" value="ECO:0007669"/>
    <property type="project" value="InterPro"/>
</dbReference>
<dbReference type="CDD" id="cd00077">
    <property type="entry name" value="HDc"/>
    <property type="match status" value="1"/>
</dbReference>
<dbReference type="FunFam" id="1.10.1300.10:FF:000003">
    <property type="entry name" value="Phosphodiesterase"/>
    <property type="match status" value="1"/>
</dbReference>
<dbReference type="FunFam" id="3.30.450.40:FF:000004">
    <property type="entry name" value="Phosphodiesterase"/>
    <property type="match status" value="1"/>
</dbReference>
<dbReference type="FunFam" id="3.30.450.40:FF:000018">
    <property type="entry name" value="Phosphodiesterase"/>
    <property type="match status" value="1"/>
</dbReference>
<dbReference type="Gene3D" id="3.30.450.40">
    <property type="match status" value="2"/>
</dbReference>
<dbReference type="Gene3D" id="1.10.1300.10">
    <property type="entry name" value="3'5'-cyclic nucleotide phosphodiesterase, catalytic domain"/>
    <property type="match status" value="1"/>
</dbReference>
<dbReference type="InterPro" id="IPR003018">
    <property type="entry name" value="GAF"/>
</dbReference>
<dbReference type="InterPro" id="IPR029016">
    <property type="entry name" value="GAF-like_dom_sf"/>
</dbReference>
<dbReference type="InterPro" id="IPR003607">
    <property type="entry name" value="HD/PDEase_dom"/>
</dbReference>
<dbReference type="InterPro" id="IPR023088">
    <property type="entry name" value="PDEase"/>
</dbReference>
<dbReference type="InterPro" id="IPR002073">
    <property type="entry name" value="PDEase_catalytic_dom"/>
</dbReference>
<dbReference type="InterPro" id="IPR036971">
    <property type="entry name" value="PDEase_catalytic_dom_sf"/>
</dbReference>
<dbReference type="InterPro" id="IPR023174">
    <property type="entry name" value="PDEase_CS"/>
</dbReference>
<dbReference type="PANTHER" id="PTHR11347">
    <property type="entry name" value="CYCLIC NUCLEOTIDE PHOSPHODIESTERASE"/>
    <property type="match status" value="1"/>
</dbReference>
<dbReference type="Pfam" id="PF01590">
    <property type="entry name" value="GAF"/>
    <property type="match status" value="2"/>
</dbReference>
<dbReference type="Pfam" id="PF00233">
    <property type="entry name" value="PDEase_I"/>
    <property type="match status" value="1"/>
</dbReference>
<dbReference type="PRINTS" id="PR00387">
    <property type="entry name" value="PDIESTERASE1"/>
</dbReference>
<dbReference type="SMART" id="SM00065">
    <property type="entry name" value="GAF"/>
    <property type="match status" value="2"/>
</dbReference>
<dbReference type="SUPFAM" id="SSF55781">
    <property type="entry name" value="GAF domain-like"/>
    <property type="match status" value="2"/>
</dbReference>
<dbReference type="SUPFAM" id="SSF109604">
    <property type="entry name" value="HD-domain/PDEase-like"/>
    <property type="match status" value="1"/>
</dbReference>
<dbReference type="PROSITE" id="PS00126">
    <property type="entry name" value="PDEASE_I_1"/>
    <property type="match status" value="1"/>
</dbReference>
<dbReference type="PROSITE" id="PS51845">
    <property type="entry name" value="PDEASE_I_2"/>
    <property type="match status" value="1"/>
</dbReference>
<keyword id="KW-0021">Allosteric enzyme</keyword>
<keyword id="KW-0114">cAMP</keyword>
<keyword id="KW-0140">cGMP</keyword>
<keyword id="KW-0963">Cytoplasm</keyword>
<keyword id="KW-0378">Hydrolase</keyword>
<keyword id="KW-0479">Metal-binding</keyword>
<keyword id="KW-1185">Reference proteome</keyword>
<keyword id="KW-0677">Repeat</keyword>
<accession>Q1KKS3</accession>
<proteinExistence type="inferred from homology"/>
<comment type="function">
    <text evidence="3">Plays a role in signal transduction by regulating the intracellular concentration of cyclic nucleotides cAMP and cGMP. Catalyzes the hydrolysis of both cAMP and cGMP to 5'-AMP and 5'-GMP, respectively.</text>
</comment>
<comment type="catalytic activity">
    <reaction evidence="3">
        <text>3',5'-cyclic GMP + H2O = GMP + H(+)</text>
        <dbReference type="Rhea" id="RHEA:16957"/>
        <dbReference type="ChEBI" id="CHEBI:15377"/>
        <dbReference type="ChEBI" id="CHEBI:15378"/>
        <dbReference type="ChEBI" id="CHEBI:57746"/>
        <dbReference type="ChEBI" id="CHEBI:58115"/>
        <dbReference type="EC" id="3.1.4.35"/>
    </reaction>
</comment>
<comment type="catalytic activity">
    <reaction evidence="3">
        <text>3',5'-cyclic AMP + H2O = AMP + H(+)</text>
        <dbReference type="Rhea" id="RHEA:25277"/>
        <dbReference type="ChEBI" id="CHEBI:15377"/>
        <dbReference type="ChEBI" id="CHEBI:15378"/>
        <dbReference type="ChEBI" id="CHEBI:58165"/>
        <dbReference type="ChEBI" id="CHEBI:456215"/>
        <dbReference type="EC" id="3.1.4.53"/>
    </reaction>
</comment>
<comment type="cofactor">
    <cofactor evidence="1">
        <name>a divalent metal cation</name>
        <dbReference type="ChEBI" id="CHEBI:60240"/>
    </cofactor>
    <text evidence="1">Binds 2 divalent metal cations per subunit. Site 1 may preferentially bind zinc ions, while site 2 has a preference for magnesium and/or manganese ions.</text>
</comment>
<comment type="subcellular location">
    <subcellularLocation>
        <location evidence="3">Cytoplasm</location>
        <location evidence="3">Cytosol</location>
    </subcellularLocation>
</comment>
<comment type="domain">
    <text evidence="3">The tandem GAF domains bind cGMP, and regulate enzyme activity. The binding of cGMP stimulates enzyme activity.</text>
</comment>
<comment type="similarity">
    <text evidence="6">Belongs to the cyclic nucleotide phosphodiesterase family.</text>
</comment>
<reference key="1">
    <citation type="journal article" date="2006" name="Proc. Natl. Acad. Sci. U.S.A.">
        <title>Highly conserved syntenic blocks at the vertebrate Hox loci and conserved regulatory elements within and outside Hox gene clusters.</title>
        <authorList>
            <person name="Lee A.P."/>
            <person name="Koh E.G.L."/>
            <person name="Tay A."/>
            <person name="Brenner S."/>
            <person name="Venkatesh B."/>
        </authorList>
    </citation>
    <scope>NUCLEOTIDE SEQUENCE [GENOMIC DNA]</scope>
</reference>
<gene>
    <name type="primary">pde11a</name>
</gene>